<keyword id="KW-0066">ATP synthesis</keyword>
<keyword id="KW-0138">CF(0)</keyword>
<keyword id="KW-0150">Chloroplast</keyword>
<keyword id="KW-0375">Hydrogen ion transport</keyword>
<keyword id="KW-0406">Ion transport</keyword>
<keyword id="KW-0472">Membrane</keyword>
<keyword id="KW-0934">Plastid</keyword>
<keyword id="KW-0793">Thylakoid</keyword>
<keyword id="KW-0812">Transmembrane</keyword>
<keyword id="KW-1133">Transmembrane helix</keyword>
<keyword id="KW-0813">Transport</keyword>
<comment type="function">
    <text evidence="1">F(1)F(0) ATP synthase produces ATP from ADP in the presence of a proton or sodium gradient. F-type ATPases consist of two structural domains, F(1) containing the extramembraneous catalytic core and F(0) containing the membrane proton channel, linked together by a central stalk and a peripheral stalk. During catalysis, ATP synthesis in the catalytic domain of F(1) is coupled via a rotary mechanism of the central stalk subunits to proton translocation.</text>
</comment>
<comment type="function">
    <text evidence="1">Component of the F(0) channel, it forms part of the peripheral stalk, linking F(1) to F(0).</text>
</comment>
<comment type="subunit">
    <text evidence="1">F-type ATPases have 2 components, F(1) - the catalytic core - and F(0) - the membrane proton channel. F(1) has five subunits: alpha(3), beta(3), gamma(1), delta(1), epsilon(1). F(0) has four main subunits: a(1), b(1), b'(1) and c(10-14). The alpha and beta chains form an alternating ring which encloses part of the gamma chain. F(1) is attached to F(0) by a central stalk formed by the gamma and epsilon chains, while a peripheral stalk is formed by the delta, b and b' chains.</text>
</comment>
<comment type="subcellular location">
    <subcellularLocation>
        <location evidence="1">Plastid</location>
        <location evidence="1">Chloroplast thylakoid membrane</location>
        <topology evidence="1">Single-pass membrane protein</topology>
    </subcellularLocation>
</comment>
<comment type="miscellaneous">
    <text>In plastids the F-type ATPase is also known as CF(1)CF(0).</text>
</comment>
<comment type="similarity">
    <text evidence="1">Belongs to the ATPase B chain family.</text>
</comment>
<organism>
    <name type="scientific">Rhodomonas salina</name>
    <name type="common">Cryptomonas salina</name>
    <dbReference type="NCBI Taxonomy" id="52970"/>
    <lineage>
        <taxon>Eukaryota</taxon>
        <taxon>Cryptophyceae</taxon>
        <taxon>Pyrenomonadales</taxon>
        <taxon>Pyrenomonadaceae</taxon>
        <taxon>Rhodomonas</taxon>
    </lineage>
</organism>
<sequence>MNDFLLISSLAELSSETKKSFGFNPNFLEANVLNIAILLSGVVYLGRNFLTSALEVRQQKVAEAIQEAEERLVQANSRLLESEKQLTQAQAVIEEIKKEAEKTARTVKESILAQGKLDIERLTNNGKSSIEKAELQIKKQIQQHITELAIQKVTVQLKEYMTPNLQSKVIDSNISNLGGQL</sequence>
<feature type="chain" id="PRO_0000368987" description="ATP synthase subunit b, chloroplastic">
    <location>
        <begin position="1"/>
        <end position="181"/>
    </location>
</feature>
<feature type="transmembrane region" description="Helical" evidence="1">
    <location>
        <begin position="31"/>
        <end position="50"/>
    </location>
</feature>
<accession>A6MVW6</accession>
<name>ATPF_RHDSA</name>
<reference key="1">
    <citation type="journal article" date="2007" name="Mol. Biol. Evol.">
        <title>Plastid genome sequence of the cryptophyte alga Rhodomonas salina CCMP1319: lateral transfer of putative DNA replication machinery and a test of chromist plastid phylogeny.</title>
        <authorList>
            <person name="Khan H."/>
            <person name="Parks N."/>
            <person name="Kozera C."/>
            <person name="Curtis B.A."/>
            <person name="Parsons B.J."/>
            <person name="Bowman S."/>
            <person name="Archibald J.M."/>
        </authorList>
    </citation>
    <scope>NUCLEOTIDE SEQUENCE [LARGE SCALE GENOMIC DNA]</scope>
    <source>
        <strain>CCMP1319 / NEPCC76 / CS-174</strain>
    </source>
</reference>
<protein>
    <recommendedName>
        <fullName evidence="1">ATP synthase subunit b, chloroplastic</fullName>
    </recommendedName>
    <alternativeName>
        <fullName evidence="1">ATP synthase F(0) sector subunit b</fullName>
    </alternativeName>
    <alternativeName>
        <fullName evidence="1">ATPase subunit I</fullName>
    </alternativeName>
</protein>
<dbReference type="EMBL" id="EF508371">
    <property type="protein sequence ID" value="ABO70819.1"/>
    <property type="molecule type" value="Genomic_DNA"/>
</dbReference>
<dbReference type="RefSeq" id="YP_001293545.1">
    <property type="nucleotide sequence ID" value="NC_009573.1"/>
</dbReference>
<dbReference type="SMR" id="A6MVW6"/>
<dbReference type="GeneID" id="5228680"/>
<dbReference type="GO" id="GO:0009535">
    <property type="term" value="C:chloroplast thylakoid membrane"/>
    <property type="evidence" value="ECO:0007669"/>
    <property type="project" value="UniProtKB-SubCell"/>
</dbReference>
<dbReference type="GO" id="GO:0045259">
    <property type="term" value="C:proton-transporting ATP synthase complex"/>
    <property type="evidence" value="ECO:0007669"/>
    <property type="project" value="UniProtKB-KW"/>
</dbReference>
<dbReference type="GO" id="GO:0046933">
    <property type="term" value="F:proton-transporting ATP synthase activity, rotational mechanism"/>
    <property type="evidence" value="ECO:0007669"/>
    <property type="project" value="UniProtKB-UniRule"/>
</dbReference>
<dbReference type="CDD" id="cd06503">
    <property type="entry name" value="ATP-synt_Fo_b"/>
    <property type="match status" value="1"/>
</dbReference>
<dbReference type="HAMAP" id="MF_01398">
    <property type="entry name" value="ATP_synth_b_bprime"/>
    <property type="match status" value="1"/>
</dbReference>
<dbReference type="InterPro" id="IPR002146">
    <property type="entry name" value="ATP_synth_b/b'su_bac/chlpt"/>
</dbReference>
<dbReference type="NCBIfam" id="NF005606">
    <property type="entry name" value="PRK07352.1"/>
    <property type="match status" value="1"/>
</dbReference>
<dbReference type="PANTHER" id="PTHR34264">
    <property type="entry name" value="ATP SYNTHASE SUBUNIT B, CHLOROPLASTIC"/>
    <property type="match status" value="1"/>
</dbReference>
<dbReference type="PANTHER" id="PTHR34264:SF3">
    <property type="entry name" value="ATP SYNTHASE SUBUNIT B, CHLOROPLASTIC"/>
    <property type="match status" value="1"/>
</dbReference>
<dbReference type="Pfam" id="PF00430">
    <property type="entry name" value="ATP-synt_B"/>
    <property type="match status" value="1"/>
</dbReference>
<gene>
    <name evidence="1" type="primary">atpF</name>
</gene>
<evidence type="ECO:0000255" key="1">
    <source>
        <dbReference type="HAMAP-Rule" id="MF_01398"/>
    </source>
</evidence>
<geneLocation type="chloroplast"/>
<proteinExistence type="inferred from homology"/>